<gene>
    <name evidence="1" type="primary">ribB</name>
    <name type="ordered locus">SNSL254_A3453</name>
</gene>
<accession>B4T665</accession>
<proteinExistence type="inferred from homology"/>
<keyword id="KW-0456">Lyase</keyword>
<keyword id="KW-0460">Magnesium</keyword>
<keyword id="KW-0464">Manganese</keyword>
<keyword id="KW-0479">Metal-binding</keyword>
<keyword id="KW-0686">Riboflavin biosynthesis</keyword>
<organism>
    <name type="scientific">Salmonella newport (strain SL254)</name>
    <dbReference type="NCBI Taxonomy" id="423368"/>
    <lineage>
        <taxon>Bacteria</taxon>
        <taxon>Pseudomonadati</taxon>
        <taxon>Pseudomonadota</taxon>
        <taxon>Gammaproteobacteria</taxon>
        <taxon>Enterobacterales</taxon>
        <taxon>Enterobacteriaceae</taxon>
        <taxon>Salmonella</taxon>
    </lineage>
</organism>
<evidence type="ECO:0000255" key="1">
    <source>
        <dbReference type="HAMAP-Rule" id="MF_00180"/>
    </source>
</evidence>
<feature type="chain" id="PRO_1000098288" description="3,4-dihydroxy-2-butanone 4-phosphate synthase">
    <location>
        <begin position="1"/>
        <end position="217"/>
    </location>
</feature>
<feature type="binding site" evidence="1">
    <location>
        <begin position="37"/>
        <end position="38"/>
    </location>
    <ligand>
        <name>D-ribulose 5-phosphate</name>
        <dbReference type="ChEBI" id="CHEBI:58121"/>
    </ligand>
</feature>
<feature type="binding site" evidence="1">
    <location>
        <position position="38"/>
    </location>
    <ligand>
        <name>Mg(2+)</name>
        <dbReference type="ChEBI" id="CHEBI:18420"/>
        <label>1</label>
    </ligand>
</feature>
<feature type="binding site" evidence="1">
    <location>
        <position position="38"/>
    </location>
    <ligand>
        <name>Mg(2+)</name>
        <dbReference type="ChEBI" id="CHEBI:18420"/>
        <label>2</label>
    </ligand>
</feature>
<feature type="binding site" evidence="1">
    <location>
        <position position="42"/>
    </location>
    <ligand>
        <name>D-ribulose 5-phosphate</name>
        <dbReference type="ChEBI" id="CHEBI:58121"/>
    </ligand>
</feature>
<feature type="binding site" evidence="1">
    <location>
        <begin position="150"/>
        <end position="154"/>
    </location>
    <ligand>
        <name>D-ribulose 5-phosphate</name>
        <dbReference type="ChEBI" id="CHEBI:58121"/>
    </ligand>
</feature>
<feature type="binding site" evidence="1">
    <location>
        <position position="153"/>
    </location>
    <ligand>
        <name>Mg(2+)</name>
        <dbReference type="ChEBI" id="CHEBI:18420"/>
        <label>2</label>
    </ligand>
</feature>
<feature type="binding site" evidence="1">
    <location>
        <position position="174"/>
    </location>
    <ligand>
        <name>D-ribulose 5-phosphate</name>
        <dbReference type="ChEBI" id="CHEBI:58121"/>
    </ligand>
</feature>
<feature type="site" description="Essential for catalytic activity" evidence="1">
    <location>
        <position position="136"/>
    </location>
</feature>
<feature type="site" description="Essential for catalytic activity" evidence="1">
    <location>
        <position position="174"/>
    </location>
</feature>
<sequence>MNQTLLSSFGTPFERVELALDALREGRGVMVLDDEDRENEGDMIFPAETMTVEQMALTIRHGSGIVCLCITEDRRKQLDLPMMVENNTSAYGTGFTVTIEAAEGVTTGVSAADRVTTVRAAIKDGAKPSDLNRPGHVFPLRAQAGGVLTRGGHTEATIDLMTLAGFKPAGVLCELTNDDGTMARAPECIAFAGQHNMAVVTIEDLVAYRQAHERKAS</sequence>
<dbReference type="EC" id="4.1.99.12" evidence="1"/>
<dbReference type="EMBL" id="CP001113">
    <property type="protein sequence ID" value="ACF65588.1"/>
    <property type="molecule type" value="Genomic_DNA"/>
</dbReference>
<dbReference type="RefSeq" id="WP_001076978.1">
    <property type="nucleotide sequence ID" value="NZ_CCMR01000001.1"/>
</dbReference>
<dbReference type="SMR" id="B4T665"/>
<dbReference type="KEGG" id="see:SNSL254_A3453"/>
<dbReference type="HOGENOM" id="CLU_020273_3_0_6"/>
<dbReference type="UniPathway" id="UPA00275">
    <property type="reaction ID" value="UER00399"/>
</dbReference>
<dbReference type="Proteomes" id="UP000008824">
    <property type="component" value="Chromosome"/>
</dbReference>
<dbReference type="GO" id="GO:0005829">
    <property type="term" value="C:cytosol"/>
    <property type="evidence" value="ECO:0007669"/>
    <property type="project" value="TreeGrafter"/>
</dbReference>
<dbReference type="GO" id="GO:0008686">
    <property type="term" value="F:3,4-dihydroxy-2-butanone-4-phosphate synthase activity"/>
    <property type="evidence" value="ECO:0007669"/>
    <property type="project" value="UniProtKB-UniRule"/>
</dbReference>
<dbReference type="GO" id="GO:0000287">
    <property type="term" value="F:magnesium ion binding"/>
    <property type="evidence" value="ECO:0007669"/>
    <property type="project" value="UniProtKB-UniRule"/>
</dbReference>
<dbReference type="GO" id="GO:0030145">
    <property type="term" value="F:manganese ion binding"/>
    <property type="evidence" value="ECO:0007669"/>
    <property type="project" value="UniProtKB-UniRule"/>
</dbReference>
<dbReference type="GO" id="GO:0009231">
    <property type="term" value="P:riboflavin biosynthetic process"/>
    <property type="evidence" value="ECO:0007669"/>
    <property type="project" value="UniProtKB-UniRule"/>
</dbReference>
<dbReference type="FunFam" id="3.90.870.10:FF:000002">
    <property type="entry name" value="3,4-dihydroxy-2-butanone 4-phosphate synthase"/>
    <property type="match status" value="1"/>
</dbReference>
<dbReference type="Gene3D" id="3.90.870.10">
    <property type="entry name" value="DHBP synthase"/>
    <property type="match status" value="1"/>
</dbReference>
<dbReference type="HAMAP" id="MF_00180">
    <property type="entry name" value="RibB"/>
    <property type="match status" value="1"/>
</dbReference>
<dbReference type="InterPro" id="IPR017945">
    <property type="entry name" value="DHBP_synth_RibB-like_a/b_dom"/>
</dbReference>
<dbReference type="InterPro" id="IPR000422">
    <property type="entry name" value="DHBP_synthase_RibB"/>
</dbReference>
<dbReference type="NCBIfam" id="TIGR00506">
    <property type="entry name" value="ribB"/>
    <property type="match status" value="1"/>
</dbReference>
<dbReference type="PANTHER" id="PTHR21327:SF38">
    <property type="entry name" value="3,4-DIHYDROXY-2-BUTANONE 4-PHOSPHATE SYNTHASE"/>
    <property type="match status" value="1"/>
</dbReference>
<dbReference type="PANTHER" id="PTHR21327">
    <property type="entry name" value="GTP CYCLOHYDROLASE II-RELATED"/>
    <property type="match status" value="1"/>
</dbReference>
<dbReference type="Pfam" id="PF00926">
    <property type="entry name" value="DHBP_synthase"/>
    <property type="match status" value="1"/>
</dbReference>
<dbReference type="SUPFAM" id="SSF55821">
    <property type="entry name" value="YrdC/RibB"/>
    <property type="match status" value="1"/>
</dbReference>
<name>RIBB_SALNS</name>
<comment type="function">
    <text evidence="1">Catalyzes the conversion of D-ribulose 5-phosphate to formate and 3,4-dihydroxy-2-butanone 4-phosphate.</text>
</comment>
<comment type="catalytic activity">
    <reaction evidence="1">
        <text>D-ribulose 5-phosphate = (2S)-2-hydroxy-3-oxobutyl phosphate + formate + H(+)</text>
        <dbReference type="Rhea" id="RHEA:18457"/>
        <dbReference type="ChEBI" id="CHEBI:15378"/>
        <dbReference type="ChEBI" id="CHEBI:15740"/>
        <dbReference type="ChEBI" id="CHEBI:58121"/>
        <dbReference type="ChEBI" id="CHEBI:58830"/>
        <dbReference type="EC" id="4.1.99.12"/>
    </reaction>
</comment>
<comment type="cofactor">
    <cofactor evidence="1">
        <name>Mg(2+)</name>
        <dbReference type="ChEBI" id="CHEBI:18420"/>
    </cofactor>
    <cofactor evidence="1">
        <name>Mn(2+)</name>
        <dbReference type="ChEBI" id="CHEBI:29035"/>
    </cofactor>
    <text evidence="1">Binds 2 divalent metal cations per subunit. Magnesium or manganese.</text>
</comment>
<comment type="pathway">
    <text evidence="1">Cofactor biosynthesis; riboflavin biosynthesis; 2-hydroxy-3-oxobutyl phosphate from D-ribulose 5-phosphate: step 1/1.</text>
</comment>
<comment type="subunit">
    <text evidence="1">Homodimer.</text>
</comment>
<comment type="similarity">
    <text evidence="1">Belongs to the DHBP synthase family.</text>
</comment>
<protein>
    <recommendedName>
        <fullName evidence="1">3,4-dihydroxy-2-butanone 4-phosphate synthase</fullName>
        <shortName evidence="1">DHBP synthase</shortName>
        <ecNumber evidence="1">4.1.99.12</ecNumber>
    </recommendedName>
</protein>
<reference key="1">
    <citation type="journal article" date="2011" name="J. Bacteriol.">
        <title>Comparative genomics of 28 Salmonella enterica isolates: evidence for CRISPR-mediated adaptive sublineage evolution.</title>
        <authorList>
            <person name="Fricke W.F."/>
            <person name="Mammel M.K."/>
            <person name="McDermott P.F."/>
            <person name="Tartera C."/>
            <person name="White D.G."/>
            <person name="Leclerc J.E."/>
            <person name="Ravel J."/>
            <person name="Cebula T.A."/>
        </authorList>
    </citation>
    <scope>NUCLEOTIDE SEQUENCE [LARGE SCALE GENOMIC DNA]</scope>
    <source>
        <strain>SL254</strain>
    </source>
</reference>